<gene>
    <name evidence="6" type="primary">FLZ13</name>
    <name evidence="5" type="synonym">DUF581-5</name>
    <name evidence="8" type="ordered locus">At1g74940</name>
    <name evidence="9" type="ORF">F25A4.9</name>
    <name evidence="10" type="ORF">F9E10.21</name>
</gene>
<organism>
    <name type="scientific">Arabidopsis thaliana</name>
    <name type="common">Mouse-ear cress</name>
    <dbReference type="NCBI Taxonomy" id="3702"/>
    <lineage>
        <taxon>Eukaryota</taxon>
        <taxon>Viridiplantae</taxon>
        <taxon>Streptophyta</taxon>
        <taxon>Embryophyta</taxon>
        <taxon>Tracheophyta</taxon>
        <taxon>Spermatophyta</taxon>
        <taxon>Magnoliopsida</taxon>
        <taxon>eudicotyledons</taxon>
        <taxon>Gunneridae</taxon>
        <taxon>Pentapetalae</taxon>
        <taxon>rosids</taxon>
        <taxon>malvids</taxon>
        <taxon>Brassicales</taxon>
        <taxon>Brassicaceae</taxon>
        <taxon>Camelineae</taxon>
        <taxon>Arabidopsis</taxon>
    </lineage>
</organism>
<accession>Q8GRN0</accession>
<accession>Q8LCV5</accession>
<accession>Q9CB02</accession>
<accession>Q9S7C1</accession>
<accession>Q9S817</accession>
<protein>
    <recommendedName>
        <fullName evidence="6">FCS-Like Zinc finger 13</fullName>
    </recommendedName>
</protein>
<evidence type="ECO:0000255" key="1">
    <source>
        <dbReference type="PROSITE-ProRule" id="PRU01131"/>
    </source>
</evidence>
<evidence type="ECO:0000269" key="2">
    <source>
    </source>
</evidence>
<evidence type="ECO:0000269" key="3">
    <source>
    </source>
</evidence>
<evidence type="ECO:0000269" key="4">
    <source>
    </source>
</evidence>
<evidence type="ECO:0000303" key="5">
    <source>
    </source>
</evidence>
<evidence type="ECO:0000303" key="6">
    <source>
    </source>
</evidence>
<evidence type="ECO:0000305" key="7"/>
<evidence type="ECO:0000312" key="8">
    <source>
        <dbReference type="Araport" id="AT1G74940"/>
    </source>
</evidence>
<evidence type="ECO:0000312" key="9">
    <source>
        <dbReference type="EMBL" id="AAD55282.1"/>
    </source>
</evidence>
<evidence type="ECO:0000312" key="10">
    <source>
        <dbReference type="EMBL" id="AAG51932.1"/>
    </source>
</evidence>
<keyword id="KW-0963">Cytoplasm</keyword>
<keyword id="KW-0479">Metal-binding</keyword>
<keyword id="KW-0539">Nucleus</keyword>
<keyword id="KW-1185">Reference proteome</keyword>
<keyword id="KW-0862">Zinc</keyword>
<keyword id="KW-0863">Zinc-finger</keyword>
<reference key="1">
    <citation type="journal article" date="2000" name="Nature">
        <title>Sequence and analysis of chromosome 1 of the plant Arabidopsis thaliana.</title>
        <authorList>
            <person name="Theologis A."/>
            <person name="Ecker J.R."/>
            <person name="Palm C.J."/>
            <person name="Federspiel N.A."/>
            <person name="Kaul S."/>
            <person name="White O."/>
            <person name="Alonso J."/>
            <person name="Altafi H."/>
            <person name="Araujo R."/>
            <person name="Bowman C.L."/>
            <person name="Brooks S.Y."/>
            <person name="Buehler E."/>
            <person name="Chan A."/>
            <person name="Chao Q."/>
            <person name="Chen H."/>
            <person name="Cheuk R.F."/>
            <person name="Chin C.W."/>
            <person name="Chung M.K."/>
            <person name="Conn L."/>
            <person name="Conway A.B."/>
            <person name="Conway A.R."/>
            <person name="Creasy T.H."/>
            <person name="Dewar K."/>
            <person name="Dunn P."/>
            <person name="Etgu P."/>
            <person name="Feldblyum T.V."/>
            <person name="Feng J.-D."/>
            <person name="Fong B."/>
            <person name="Fujii C.Y."/>
            <person name="Gill J.E."/>
            <person name="Goldsmith A.D."/>
            <person name="Haas B."/>
            <person name="Hansen N.F."/>
            <person name="Hughes B."/>
            <person name="Huizar L."/>
            <person name="Hunter J.L."/>
            <person name="Jenkins J."/>
            <person name="Johnson-Hopson C."/>
            <person name="Khan S."/>
            <person name="Khaykin E."/>
            <person name="Kim C.J."/>
            <person name="Koo H.L."/>
            <person name="Kremenetskaia I."/>
            <person name="Kurtz D.B."/>
            <person name="Kwan A."/>
            <person name="Lam B."/>
            <person name="Langin-Hooper S."/>
            <person name="Lee A."/>
            <person name="Lee J.M."/>
            <person name="Lenz C.A."/>
            <person name="Li J.H."/>
            <person name="Li Y.-P."/>
            <person name="Lin X."/>
            <person name="Liu S.X."/>
            <person name="Liu Z.A."/>
            <person name="Luros J.S."/>
            <person name="Maiti R."/>
            <person name="Marziali A."/>
            <person name="Militscher J."/>
            <person name="Miranda M."/>
            <person name="Nguyen M."/>
            <person name="Nierman W.C."/>
            <person name="Osborne B.I."/>
            <person name="Pai G."/>
            <person name="Peterson J."/>
            <person name="Pham P.K."/>
            <person name="Rizzo M."/>
            <person name="Rooney T."/>
            <person name="Rowley D."/>
            <person name="Sakano H."/>
            <person name="Salzberg S.L."/>
            <person name="Schwartz J.R."/>
            <person name="Shinn P."/>
            <person name="Southwick A.M."/>
            <person name="Sun H."/>
            <person name="Tallon L.J."/>
            <person name="Tambunga G."/>
            <person name="Toriumi M.J."/>
            <person name="Town C.D."/>
            <person name="Utterback T."/>
            <person name="Van Aken S."/>
            <person name="Vaysberg M."/>
            <person name="Vysotskaia V.S."/>
            <person name="Walker M."/>
            <person name="Wu D."/>
            <person name="Yu G."/>
            <person name="Fraser C.M."/>
            <person name="Venter J.C."/>
            <person name="Davis R.W."/>
        </authorList>
    </citation>
    <scope>NUCLEOTIDE SEQUENCE [LARGE SCALE GENOMIC DNA]</scope>
    <source>
        <strain>cv. Columbia</strain>
    </source>
</reference>
<reference key="2">
    <citation type="journal article" date="2017" name="Plant J.">
        <title>Araport11: a complete reannotation of the Arabidopsis thaliana reference genome.</title>
        <authorList>
            <person name="Cheng C.Y."/>
            <person name="Krishnakumar V."/>
            <person name="Chan A.P."/>
            <person name="Thibaud-Nissen F."/>
            <person name="Schobel S."/>
            <person name="Town C.D."/>
        </authorList>
    </citation>
    <scope>GENOME REANNOTATION</scope>
    <source>
        <strain>cv. Columbia</strain>
    </source>
</reference>
<reference key="3">
    <citation type="journal article" date="2003" name="Science">
        <title>Empirical analysis of transcriptional activity in the Arabidopsis genome.</title>
        <authorList>
            <person name="Yamada K."/>
            <person name="Lim J."/>
            <person name="Dale J.M."/>
            <person name="Chen H."/>
            <person name="Shinn P."/>
            <person name="Palm C.J."/>
            <person name="Southwick A.M."/>
            <person name="Wu H.C."/>
            <person name="Kim C.J."/>
            <person name="Nguyen M."/>
            <person name="Pham P.K."/>
            <person name="Cheuk R.F."/>
            <person name="Karlin-Newmann G."/>
            <person name="Liu S.X."/>
            <person name="Lam B."/>
            <person name="Sakano H."/>
            <person name="Wu T."/>
            <person name="Yu G."/>
            <person name="Miranda M."/>
            <person name="Quach H.L."/>
            <person name="Tripp M."/>
            <person name="Chang C.H."/>
            <person name="Lee J.M."/>
            <person name="Toriumi M.J."/>
            <person name="Chan M.M."/>
            <person name="Tang C.C."/>
            <person name="Onodera C.S."/>
            <person name="Deng J.M."/>
            <person name="Akiyama K."/>
            <person name="Ansari Y."/>
            <person name="Arakawa T."/>
            <person name="Banh J."/>
            <person name="Banno F."/>
            <person name="Bowser L."/>
            <person name="Brooks S.Y."/>
            <person name="Carninci P."/>
            <person name="Chao Q."/>
            <person name="Choy N."/>
            <person name="Enju A."/>
            <person name="Goldsmith A.D."/>
            <person name="Gurjal M."/>
            <person name="Hansen N.F."/>
            <person name="Hayashizaki Y."/>
            <person name="Johnson-Hopson C."/>
            <person name="Hsuan V.W."/>
            <person name="Iida K."/>
            <person name="Karnes M."/>
            <person name="Khan S."/>
            <person name="Koesema E."/>
            <person name="Ishida J."/>
            <person name="Jiang P.X."/>
            <person name="Jones T."/>
            <person name="Kawai J."/>
            <person name="Kamiya A."/>
            <person name="Meyers C."/>
            <person name="Nakajima M."/>
            <person name="Narusaka M."/>
            <person name="Seki M."/>
            <person name="Sakurai T."/>
            <person name="Satou M."/>
            <person name="Tamse R."/>
            <person name="Vaysberg M."/>
            <person name="Wallender E.K."/>
            <person name="Wong C."/>
            <person name="Yamamura Y."/>
            <person name="Yuan S."/>
            <person name="Shinozaki K."/>
            <person name="Davis R.W."/>
            <person name="Theologis A."/>
            <person name="Ecker J.R."/>
        </authorList>
    </citation>
    <scope>NUCLEOTIDE SEQUENCE [LARGE SCALE MRNA]</scope>
    <source>
        <strain>cv. Columbia</strain>
    </source>
</reference>
<reference key="4">
    <citation type="submission" date="2002-03" db="EMBL/GenBank/DDBJ databases">
        <title>Full-length cDNA from Arabidopsis thaliana.</title>
        <authorList>
            <person name="Brover V.V."/>
            <person name="Troukhan M.E."/>
            <person name="Alexandrov N.A."/>
            <person name="Lu Y.-P."/>
            <person name="Flavell R.B."/>
            <person name="Feldmann K.A."/>
        </authorList>
    </citation>
    <scope>NUCLEOTIDE SEQUENCE [LARGE SCALE MRNA]</scope>
</reference>
<reference key="5">
    <citation type="journal article" date="2014" name="Front. Plant Sci.">
        <title>The complex becomes more complex: protein-protein interactions of SnRK1 with DUF581 family proteins provide a framework for cell- and stimulus type-specific SnRK1 signaling in plants.</title>
        <authorList>
            <person name="Nietzsche M."/>
            <person name="Schiessl I."/>
            <person name="Boernke F."/>
        </authorList>
    </citation>
    <scope>GENE FAMILY</scope>
    <scope>INTERACTION WITH KIN10 AND KIN11</scope>
    <scope>SUBCELLULAR LOCATION</scope>
    <scope>FUNCTION</scope>
</reference>
<reference key="6">
    <citation type="journal article" date="2014" name="Front. Plant Sci.">
        <title>Corrigendum: The complex becomes more complex: protein-protein interactions of SnRK1 with DUF581 family proteins provide a framework for cell- and stimulus type-specific SnRK1 signaling in plants.</title>
        <authorList>
            <person name="Boernke F."/>
        </authorList>
    </citation>
    <scope>ERRATUM OF PUBMED:24600465</scope>
</reference>
<reference key="7">
    <citation type="journal article" date="2014" name="PLoS ONE">
        <title>DUF581 is plant specific FCS-like zinc finger involved in protein-protein interaction.</title>
        <authorList>
            <person name="Jamsheer K M."/>
            <person name="Laxmi A."/>
        </authorList>
    </citation>
    <scope>GENE FAMILY</scope>
    <scope>NOMENCLATURE</scope>
</reference>
<reference key="8">
    <citation type="journal article" date="2015" name="Front. Plant Sci.">
        <title>Expression of Arabidopsis FCS-Like Zinc finger genes is differentially regulated by sugars, cellular energy level, and abiotic stress.</title>
        <authorList>
            <person name="Jamsheer K M."/>
            <person name="Laxmi A."/>
        </authorList>
    </citation>
    <scope>INDUCTION</scope>
</reference>
<reference key="9">
    <citation type="journal article" date="2018" name="J. Biol. Chem.">
        <title>The FCS-like zinc finger scaffold of the kinase SnRK1 is formed by the coordinated actions of the FLZ domain and intrinsically disordered regions.</title>
        <authorList>
            <person name="Jamsheer K M."/>
            <person name="Shukla B.N."/>
            <person name="Jindal S."/>
            <person name="Gopan N."/>
            <person name="Mannully C.T."/>
            <person name="Laxmi A."/>
        </authorList>
    </citation>
    <scope>INTERACTION WITH KIN10; KIN11; KINB1; KINB2; KINB3 AND SNF4</scope>
</reference>
<dbReference type="EMBL" id="AC008263">
    <property type="protein sequence ID" value="AAD55282.1"/>
    <property type="status" value="ALT_INIT"/>
    <property type="molecule type" value="Genomic_DNA"/>
</dbReference>
<dbReference type="EMBL" id="AC013258">
    <property type="protein sequence ID" value="AAG51932.1"/>
    <property type="status" value="ALT_INIT"/>
    <property type="molecule type" value="Genomic_DNA"/>
</dbReference>
<dbReference type="EMBL" id="CP002684">
    <property type="protein sequence ID" value="AEE35653.1"/>
    <property type="molecule type" value="Genomic_DNA"/>
</dbReference>
<dbReference type="EMBL" id="BT000460">
    <property type="protein sequence ID" value="AAN17437.1"/>
    <property type="molecule type" value="mRNA"/>
</dbReference>
<dbReference type="EMBL" id="BT002550">
    <property type="protein sequence ID" value="AAO00910.1"/>
    <property type="molecule type" value="mRNA"/>
</dbReference>
<dbReference type="EMBL" id="AY086389">
    <property type="protein sequence ID" value="AAM64456.1"/>
    <property type="molecule type" value="mRNA"/>
</dbReference>
<dbReference type="PIR" id="B96779">
    <property type="entry name" value="B96779"/>
</dbReference>
<dbReference type="PIR" id="E96778">
    <property type="entry name" value="E96778"/>
</dbReference>
<dbReference type="RefSeq" id="NP_565095.1">
    <property type="nucleotide sequence ID" value="NM_106152.4"/>
</dbReference>
<dbReference type="FunCoup" id="Q8GRN0">
    <property type="interactions" value="49"/>
</dbReference>
<dbReference type="IntAct" id="Q8GRN0">
    <property type="interactions" value="7"/>
</dbReference>
<dbReference type="STRING" id="3702.Q8GRN0"/>
<dbReference type="iPTMnet" id="Q8GRN0"/>
<dbReference type="PaxDb" id="3702-AT1G74940.1"/>
<dbReference type="ProteomicsDB" id="230604"/>
<dbReference type="EnsemblPlants" id="AT1G74940.1">
    <property type="protein sequence ID" value="AT1G74940.1"/>
    <property type="gene ID" value="AT1G74940"/>
</dbReference>
<dbReference type="GeneID" id="843833"/>
<dbReference type="Gramene" id="AT1G74940.1">
    <property type="protein sequence ID" value="AT1G74940.1"/>
    <property type="gene ID" value="AT1G74940"/>
</dbReference>
<dbReference type="KEGG" id="ath:AT1G74940"/>
<dbReference type="Araport" id="AT1G74940"/>
<dbReference type="TAIR" id="AT1G74940"/>
<dbReference type="eggNOG" id="ENOG502RZ1P">
    <property type="taxonomic scope" value="Eukaryota"/>
</dbReference>
<dbReference type="HOGENOM" id="CLU_103134_0_0_1"/>
<dbReference type="InParanoid" id="Q8GRN0"/>
<dbReference type="OMA" id="CRDATEF"/>
<dbReference type="PhylomeDB" id="Q8GRN0"/>
<dbReference type="PRO" id="PR:Q8GRN0"/>
<dbReference type="Proteomes" id="UP000006548">
    <property type="component" value="Chromosome 1"/>
</dbReference>
<dbReference type="ExpressionAtlas" id="Q8GRN0">
    <property type="expression patterns" value="baseline and differential"/>
</dbReference>
<dbReference type="GO" id="GO:0005829">
    <property type="term" value="C:cytosol"/>
    <property type="evidence" value="ECO:0000314"/>
    <property type="project" value="UniProtKB"/>
</dbReference>
<dbReference type="GO" id="GO:0005634">
    <property type="term" value="C:nucleus"/>
    <property type="evidence" value="ECO:0000314"/>
    <property type="project" value="UniProtKB"/>
</dbReference>
<dbReference type="GO" id="GO:0019900">
    <property type="term" value="F:kinase binding"/>
    <property type="evidence" value="ECO:0000353"/>
    <property type="project" value="UniProtKB"/>
</dbReference>
<dbReference type="GO" id="GO:0008270">
    <property type="term" value="F:zinc ion binding"/>
    <property type="evidence" value="ECO:0007669"/>
    <property type="project" value="UniProtKB-KW"/>
</dbReference>
<dbReference type="GO" id="GO:0071456">
    <property type="term" value="P:cellular response to hypoxia"/>
    <property type="evidence" value="ECO:0007007"/>
    <property type="project" value="TAIR"/>
</dbReference>
<dbReference type="GO" id="GO:1902074">
    <property type="term" value="P:response to salt"/>
    <property type="evidence" value="ECO:0000270"/>
    <property type="project" value="UniProtKB"/>
</dbReference>
<dbReference type="InterPro" id="IPR044604">
    <property type="entry name" value="FLZ12/13/14"/>
</dbReference>
<dbReference type="InterPro" id="IPR007650">
    <property type="entry name" value="Zf-FLZ_dom"/>
</dbReference>
<dbReference type="PANTHER" id="PTHR47208:SF5">
    <property type="entry name" value="FCS-LIKE ZINC FINGER 12-RELATED"/>
    <property type="match status" value="1"/>
</dbReference>
<dbReference type="PANTHER" id="PTHR47208">
    <property type="entry name" value="OS02G0174800 PROTEIN"/>
    <property type="match status" value="1"/>
</dbReference>
<dbReference type="Pfam" id="PF04570">
    <property type="entry name" value="zf-FLZ"/>
    <property type="match status" value="1"/>
</dbReference>
<dbReference type="PROSITE" id="PS51795">
    <property type="entry name" value="ZF_FLZ"/>
    <property type="match status" value="1"/>
</dbReference>
<sequence length="222" mass="24969">MILSKRPHLMIRKLSEMLVPRSRSAAIKPEEYTASPRSPLDLNFPSPVHSKRFGSGGVGLGIVAALEETSNGINRHDPVRYSGRFRCPEIDLSDEEYTYVTSPNGPTKVYYNDDGFELSENDYRRVHKPMVTVDEPPVIERQSVRGPTEFLSSCCLCKKKLQGKDIYMYKGEMGFCSAECRSVQIMNDERQEQCKTQVSRNADVLSSPYAAGQRLSAGVFVF</sequence>
<proteinExistence type="evidence at protein level"/>
<feature type="chain" id="PRO_0000445503" description="FCS-Like Zinc finger 13">
    <location>
        <begin position="1"/>
        <end position="222"/>
    </location>
</feature>
<feature type="zinc finger region" description="FLZ-type" evidence="1">
    <location>
        <begin position="149"/>
        <end position="192"/>
    </location>
</feature>
<feature type="sequence conflict" description="In Ref. 4; AAM64456." evidence="7" ref="4">
    <original>T</original>
    <variation>I</variation>
    <location>
        <position position="132"/>
    </location>
</feature>
<name>FLZ13_ARATH</name>
<comment type="function">
    <text evidence="2">May act as an adapter to facilitate the interaction of SnRK1 complex with effector proteins, conferring tissue- and stimulus-type specific differences in the SnRK1 regulation pathway.</text>
</comment>
<comment type="subunit">
    <text evidence="2 4">Interacts with KIN10 and KIN11 via its FLZ-type zinc finger domain (PubMed:24600465, PubMed:29945970). Interacts with KINB1, KINB2, KINB3 and SNF4 via its N-terminal part (PubMed:29945970).</text>
</comment>
<comment type="subcellular location">
    <subcellularLocation>
        <location evidence="2">Nucleus</location>
    </subcellularLocation>
    <subcellularLocation>
        <location evidence="2">Cytoplasm</location>
    </subcellularLocation>
    <text evidence="2">Shuttles from the cytoplasm to the nucleus when associated with KIN10.</text>
</comment>
<comment type="induction">
    <text evidence="3">Down-regulated by NaCl.</text>
</comment>
<comment type="similarity">
    <text evidence="7">Belongs to the FLZ family.</text>
</comment>
<comment type="sequence caution" evidence="7">
    <conflict type="erroneous initiation">
        <sequence resource="EMBL-CDS" id="AAD55282"/>
    </conflict>
    <text>Truncated N-terminus.</text>
</comment>
<comment type="sequence caution" evidence="7">
    <conflict type="erroneous initiation">
        <sequence resource="EMBL-CDS" id="AAG51932"/>
    </conflict>
    <text>Truncated N-terminus.</text>
</comment>